<reference key="1">
    <citation type="journal article" date="2010" name="J. Bacteriol.">
        <title>Complete genome sequence of Beijerinckia indica subsp. indica.</title>
        <authorList>
            <person name="Tamas I."/>
            <person name="Dedysh S.N."/>
            <person name="Liesack W."/>
            <person name="Stott M.B."/>
            <person name="Alam M."/>
            <person name="Murrell J.C."/>
            <person name="Dunfield P.F."/>
        </authorList>
    </citation>
    <scope>NUCLEOTIDE SEQUENCE [LARGE SCALE GENOMIC DNA]</scope>
    <source>
        <strain>ATCC 9039 / DSM 1715 / NCIMB 8712</strain>
    </source>
</reference>
<name>ACCA_BEII9</name>
<feature type="chain" id="PRO_1000134460" description="Acetyl-coenzyme A carboxylase carboxyl transferase subunit alpha">
    <location>
        <begin position="1"/>
        <end position="317"/>
    </location>
</feature>
<feature type="domain" description="CoA carboxyltransferase C-terminal" evidence="2">
    <location>
        <begin position="39"/>
        <end position="293"/>
    </location>
</feature>
<organism>
    <name type="scientific">Beijerinckia indica subsp. indica (strain ATCC 9039 / DSM 1715 / NCIMB 8712)</name>
    <dbReference type="NCBI Taxonomy" id="395963"/>
    <lineage>
        <taxon>Bacteria</taxon>
        <taxon>Pseudomonadati</taxon>
        <taxon>Pseudomonadota</taxon>
        <taxon>Alphaproteobacteria</taxon>
        <taxon>Hyphomicrobiales</taxon>
        <taxon>Beijerinckiaceae</taxon>
        <taxon>Beijerinckia</taxon>
    </lineage>
</organism>
<proteinExistence type="inferred from homology"/>
<dbReference type="EC" id="2.1.3.15" evidence="1"/>
<dbReference type="EMBL" id="CP001016">
    <property type="protein sequence ID" value="ACB96486.1"/>
    <property type="molecule type" value="Genomic_DNA"/>
</dbReference>
<dbReference type="RefSeq" id="WP_012385837.1">
    <property type="nucleotide sequence ID" value="NC_010581.1"/>
</dbReference>
<dbReference type="SMR" id="B2IKU6"/>
<dbReference type="STRING" id="395963.Bind_2918"/>
<dbReference type="KEGG" id="bid:Bind_2918"/>
<dbReference type="eggNOG" id="COG0825">
    <property type="taxonomic scope" value="Bacteria"/>
</dbReference>
<dbReference type="HOGENOM" id="CLU_015486_0_2_5"/>
<dbReference type="OrthoDB" id="9808023at2"/>
<dbReference type="UniPathway" id="UPA00655">
    <property type="reaction ID" value="UER00711"/>
</dbReference>
<dbReference type="Proteomes" id="UP000001695">
    <property type="component" value="Chromosome"/>
</dbReference>
<dbReference type="GO" id="GO:0009317">
    <property type="term" value="C:acetyl-CoA carboxylase complex"/>
    <property type="evidence" value="ECO:0007669"/>
    <property type="project" value="InterPro"/>
</dbReference>
<dbReference type="GO" id="GO:0003989">
    <property type="term" value="F:acetyl-CoA carboxylase activity"/>
    <property type="evidence" value="ECO:0007669"/>
    <property type="project" value="InterPro"/>
</dbReference>
<dbReference type="GO" id="GO:0005524">
    <property type="term" value="F:ATP binding"/>
    <property type="evidence" value="ECO:0007669"/>
    <property type="project" value="UniProtKB-KW"/>
</dbReference>
<dbReference type="GO" id="GO:0016743">
    <property type="term" value="F:carboxyl- or carbamoyltransferase activity"/>
    <property type="evidence" value="ECO:0007669"/>
    <property type="project" value="UniProtKB-UniRule"/>
</dbReference>
<dbReference type="GO" id="GO:0006633">
    <property type="term" value="P:fatty acid biosynthetic process"/>
    <property type="evidence" value="ECO:0007669"/>
    <property type="project" value="UniProtKB-KW"/>
</dbReference>
<dbReference type="GO" id="GO:2001295">
    <property type="term" value="P:malonyl-CoA biosynthetic process"/>
    <property type="evidence" value="ECO:0007669"/>
    <property type="project" value="UniProtKB-UniRule"/>
</dbReference>
<dbReference type="Gene3D" id="3.90.226.10">
    <property type="entry name" value="2-enoyl-CoA Hydratase, Chain A, domain 1"/>
    <property type="match status" value="1"/>
</dbReference>
<dbReference type="HAMAP" id="MF_00823">
    <property type="entry name" value="AcetylCoA_CT_alpha"/>
    <property type="match status" value="1"/>
</dbReference>
<dbReference type="InterPro" id="IPR001095">
    <property type="entry name" value="Acetyl_CoA_COase_a_su"/>
</dbReference>
<dbReference type="InterPro" id="IPR029045">
    <property type="entry name" value="ClpP/crotonase-like_dom_sf"/>
</dbReference>
<dbReference type="InterPro" id="IPR011763">
    <property type="entry name" value="COA_CT_C"/>
</dbReference>
<dbReference type="NCBIfam" id="TIGR00513">
    <property type="entry name" value="accA"/>
    <property type="match status" value="1"/>
</dbReference>
<dbReference type="NCBIfam" id="NF041504">
    <property type="entry name" value="AccA_sub"/>
    <property type="match status" value="1"/>
</dbReference>
<dbReference type="NCBIfam" id="NF004344">
    <property type="entry name" value="PRK05724.1"/>
    <property type="match status" value="1"/>
</dbReference>
<dbReference type="PANTHER" id="PTHR42853">
    <property type="entry name" value="ACETYL-COENZYME A CARBOXYLASE CARBOXYL TRANSFERASE SUBUNIT ALPHA"/>
    <property type="match status" value="1"/>
</dbReference>
<dbReference type="PANTHER" id="PTHR42853:SF3">
    <property type="entry name" value="ACETYL-COENZYME A CARBOXYLASE CARBOXYL TRANSFERASE SUBUNIT ALPHA, CHLOROPLASTIC"/>
    <property type="match status" value="1"/>
</dbReference>
<dbReference type="Pfam" id="PF03255">
    <property type="entry name" value="ACCA"/>
    <property type="match status" value="1"/>
</dbReference>
<dbReference type="PRINTS" id="PR01069">
    <property type="entry name" value="ACCCTRFRASEA"/>
</dbReference>
<dbReference type="SUPFAM" id="SSF52096">
    <property type="entry name" value="ClpP/crotonase"/>
    <property type="match status" value="1"/>
</dbReference>
<dbReference type="PROSITE" id="PS50989">
    <property type="entry name" value="COA_CT_CTER"/>
    <property type="match status" value="1"/>
</dbReference>
<accession>B2IKU6</accession>
<protein>
    <recommendedName>
        <fullName evidence="1">Acetyl-coenzyme A carboxylase carboxyl transferase subunit alpha</fullName>
        <shortName evidence="1">ACCase subunit alpha</shortName>
        <shortName evidence="1">Acetyl-CoA carboxylase carboxyltransferase subunit alpha</shortName>
        <ecNumber evidence="1">2.1.3.15</ecNumber>
    </recommendedName>
</protein>
<comment type="function">
    <text evidence="1">Component of the acetyl coenzyme A carboxylase (ACC) complex. First, biotin carboxylase catalyzes the carboxylation of biotin on its carrier protein (BCCP) and then the CO(2) group is transferred by the carboxyltransferase to acetyl-CoA to form malonyl-CoA.</text>
</comment>
<comment type="catalytic activity">
    <reaction evidence="1">
        <text>N(6)-carboxybiotinyl-L-lysyl-[protein] + acetyl-CoA = N(6)-biotinyl-L-lysyl-[protein] + malonyl-CoA</text>
        <dbReference type="Rhea" id="RHEA:54728"/>
        <dbReference type="Rhea" id="RHEA-COMP:10505"/>
        <dbReference type="Rhea" id="RHEA-COMP:10506"/>
        <dbReference type="ChEBI" id="CHEBI:57288"/>
        <dbReference type="ChEBI" id="CHEBI:57384"/>
        <dbReference type="ChEBI" id="CHEBI:83144"/>
        <dbReference type="ChEBI" id="CHEBI:83145"/>
        <dbReference type="EC" id="2.1.3.15"/>
    </reaction>
</comment>
<comment type="pathway">
    <text evidence="1">Lipid metabolism; malonyl-CoA biosynthesis; malonyl-CoA from acetyl-CoA: step 1/1.</text>
</comment>
<comment type="subunit">
    <text evidence="1">Acetyl-CoA carboxylase is a heterohexamer composed of biotin carboxyl carrier protein (AccB), biotin carboxylase (AccC) and two subunits each of ACCase subunit alpha (AccA) and ACCase subunit beta (AccD).</text>
</comment>
<comment type="subcellular location">
    <subcellularLocation>
        <location evidence="1">Cytoplasm</location>
    </subcellularLocation>
</comment>
<comment type="similarity">
    <text evidence="1">Belongs to the AccA family.</text>
</comment>
<keyword id="KW-0067">ATP-binding</keyword>
<keyword id="KW-0963">Cytoplasm</keyword>
<keyword id="KW-0275">Fatty acid biosynthesis</keyword>
<keyword id="KW-0276">Fatty acid metabolism</keyword>
<keyword id="KW-0444">Lipid biosynthesis</keyword>
<keyword id="KW-0443">Lipid metabolism</keyword>
<keyword id="KW-0547">Nucleotide-binding</keyword>
<keyword id="KW-1185">Reference proteome</keyword>
<keyword id="KW-0808">Transferase</keyword>
<gene>
    <name evidence="1" type="primary">accA</name>
    <name type="ordered locus">Bind_2918</name>
</gene>
<evidence type="ECO:0000255" key="1">
    <source>
        <dbReference type="HAMAP-Rule" id="MF_00823"/>
    </source>
</evidence>
<evidence type="ECO:0000255" key="2">
    <source>
        <dbReference type="PROSITE-ProRule" id="PRU01137"/>
    </source>
</evidence>
<sequence length="317" mass="34136">MRSYLDFEKPVAELEAKIDELRTLNAQEDTPAIGEELTKLEAKAQKALGDLYASLTPWQKTQVARHPQRPHFVDFVQGFIDDFTPLSGDRKFGDDAAIIGGFGWFEGQSICVIGQEKGADTESRIKHNFGLARPEGYRKAVRLMELADRFGVPVLSLVDTAGAFPGVDAEERGQAEAIARGTDACLSLGVPNIAVILGEGGSGGAIAIAACNTVLMLENAIYTVASPEASASILWRDATRAQDAAMSMKITAQDLLKFGIIDKIVPEPLGGAHRDSSTTIVAVKEAVVEALGALRDLSPSEVRRVRREKFLGMGRKL</sequence>